<comment type="function">
    <text evidence="1">Fluoride-specific ion channel. Important for reducing fluoride concentration in the cell, thus reducing its toxicity.</text>
</comment>
<comment type="catalytic activity">
    <reaction evidence="1">
        <text>fluoride(in) = fluoride(out)</text>
        <dbReference type="Rhea" id="RHEA:76159"/>
        <dbReference type="ChEBI" id="CHEBI:17051"/>
    </reaction>
    <physiologicalReaction direction="left-to-right" evidence="1">
        <dbReference type="Rhea" id="RHEA:76160"/>
    </physiologicalReaction>
</comment>
<comment type="activity regulation">
    <text evidence="1">Na(+) is not transported, but it plays an essential structural role and its presence is essential for fluoride channel function.</text>
</comment>
<comment type="subcellular location">
    <subcellularLocation>
        <location evidence="1">Cell membrane</location>
        <topology evidence="1">Multi-pass membrane protein</topology>
    </subcellularLocation>
</comment>
<comment type="similarity">
    <text evidence="1">Belongs to the fluoride channel Fluc/FEX (TC 1.A.43) family.</text>
</comment>
<dbReference type="EMBL" id="AE016879">
    <property type="protein sequence ID" value="AAP28981.1"/>
    <property type="molecule type" value="Genomic_DNA"/>
</dbReference>
<dbReference type="EMBL" id="AE017334">
    <property type="protein sequence ID" value="AAT34452.1"/>
    <property type="molecule type" value="Genomic_DNA"/>
</dbReference>
<dbReference type="EMBL" id="AE017225">
    <property type="protein sequence ID" value="AAT57232.1"/>
    <property type="molecule type" value="Genomic_DNA"/>
</dbReference>
<dbReference type="RefSeq" id="NP_847495.1">
    <property type="nucleotide sequence ID" value="NC_003997.3"/>
</dbReference>
<dbReference type="RefSeq" id="YP_031182.1">
    <property type="nucleotide sequence ID" value="NC_005945.1"/>
</dbReference>
<dbReference type="SMR" id="Q81XC1"/>
<dbReference type="STRING" id="261594.GBAA_5319"/>
<dbReference type="DNASU" id="1084821"/>
<dbReference type="KEGG" id="ban:BA_5319"/>
<dbReference type="KEGG" id="bar:GBAA_5319"/>
<dbReference type="KEGG" id="bat:BAS4941"/>
<dbReference type="PATRIC" id="fig|198094.11.peg.5279"/>
<dbReference type="eggNOG" id="COG0239">
    <property type="taxonomic scope" value="Bacteria"/>
</dbReference>
<dbReference type="HOGENOM" id="CLU_114342_1_2_9"/>
<dbReference type="Proteomes" id="UP000000427">
    <property type="component" value="Chromosome"/>
</dbReference>
<dbReference type="Proteomes" id="UP000000594">
    <property type="component" value="Chromosome"/>
</dbReference>
<dbReference type="GO" id="GO:0005886">
    <property type="term" value="C:plasma membrane"/>
    <property type="evidence" value="ECO:0007669"/>
    <property type="project" value="UniProtKB-SubCell"/>
</dbReference>
<dbReference type="GO" id="GO:0062054">
    <property type="term" value="F:fluoride channel activity"/>
    <property type="evidence" value="ECO:0007669"/>
    <property type="project" value="UniProtKB-UniRule"/>
</dbReference>
<dbReference type="GO" id="GO:0046872">
    <property type="term" value="F:metal ion binding"/>
    <property type="evidence" value="ECO:0007669"/>
    <property type="project" value="UniProtKB-KW"/>
</dbReference>
<dbReference type="GO" id="GO:0140114">
    <property type="term" value="P:cellular detoxification of fluoride"/>
    <property type="evidence" value="ECO:0007669"/>
    <property type="project" value="UniProtKB-UniRule"/>
</dbReference>
<dbReference type="HAMAP" id="MF_00454">
    <property type="entry name" value="FluC"/>
    <property type="match status" value="1"/>
</dbReference>
<dbReference type="InterPro" id="IPR003691">
    <property type="entry name" value="FluC"/>
</dbReference>
<dbReference type="NCBIfam" id="TIGR00494">
    <property type="entry name" value="crcB"/>
    <property type="match status" value="1"/>
</dbReference>
<dbReference type="PANTHER" id="PTHR28259">
    <property type="entry name" value="FLUORIDE EXPORT PROTEIN 1-RELATED"/>
    <property type="match status" value="1"/>
</dbReference>
<dbReference type="PANTHER" id="PTHR28259:SF1">
    <property type="entry name" value="FLUORIDE EXPORT PROTEIN 1-RELATED"/>
    <property type="match status" value="1"/>
</dbReference>
<dbReference type="Pfam" id="PF02537">
    <property type="entry name" value="CRCB"/>
    <property type="match status" value="1"/>
</dbReference>
<proteinExistence type="inferred from homology"/>
<organism>
    <name type="scientific">Bacillus anthracis</name>
    <dbReference type="NCBI Taxonomy" id="1392"/>
    <lineage>
        <taxon>Bacteria</taxon>
        <taxon>Bacillati</taxon>
        <taxon>Bacillota</taxon>
        <taxon>Bacilli</taxon>
        <taxon>Bacillales</taxon>
        <taxon>Bacillaceae</taxon>
        <taxon>Bacillus</taxon>
        <taxon>Bacillus cereus group</taxon>
    </lineage>
</organism>
<reference key="1">
    <citation type="journal article" date="2003" name="Nature">
        <title>The genome sequence of Bacillus anthracis Ames and comparison to closely related bacteria.</title>
        <authorList>
            <person name="Read T.D."/>
            <person name="Peterson S.N."/>
            <person name="Tourasse N.J."/>
            <person name="Baillie L.W."/>
            <person name="Paulsen I.T."/>
            <person name="Nelson K.E."/>
            <person name="Tettelin H."/>
            <person name="Fouts D.E."/>
            <person name="Eisen J.A."/>
            <person name="Gill S.R."/>
            <person name="Holtzapple E.K."/>
            <person name="Okstad O.A."/>
            <person name="Helgason E."/>
            <person name="Rilstone J."/>
            <person name="Wu M."/>
            <person name="Kolonay J.F."/>
            <person name="Beanan M.J."/>
            <person name="Dodson R.J."/>
            <person name="Brinkac L.M."/>
            <person name="Gwinn M.L."/>
            <person name="DeBoy R.T."/>
            <person name="Madpu R."/>
            <person name="Daugherty S.C."/>
            <person name="Durkin A.S."/>
            <person name="Haft D.H."/>
            <person name="Nelson W.C."/>
            <person name="Peterson J.D."/>
            <person name="Pop M."/>
            <person name="Khouri H.M."/>
            <person name="Radune D."/>
            <person name="Benton J.L."/>
            <person name="Mahamoud Y."/>
            <person name="Jiang L."/>
            <person name="Hance I.R."/>
            <person name="Weidman J.F."/>
            <person name="Berry K.J."/>
            <person name="Plaut R.D."/>
            <person name="Wolf A.M."/>
            <person name="Watkins K.L."/>
            <person name="Nierman W.C."/>
            <person name="Hazen A."/>
            <person name="Cline R.T."/>
            <person name="Redmond C."/>
            <person name="Thwaite J.E."/>
            <person name="White O."/>
            <person name="Salzberg S.L."/>
            <person name="Thomason B."/>
            <person name="Friedlander A.M."/>
            <person name="Koehler T.M."/>
            <person name="Hanna P.C."/>
            <person name="Kolstoe A.-B."/>
            <person name="Fraser C.M."/>
        </authorList>
    </citation>
    <scope>NUCLEOTIDE SEQUENCE [LARGE SCALE GENOMIC DNA]</scope>
    <source>
        <strain>Ames / isolate Porton</strain>
    </source>
</reference>
<reference key="2">
    <citation type="journal article" date="2009" name="J. Bacteriol.">
        <title>The complete genome sequence of Bacillus anthracis Ames 'Ancestor'.</title>
        <authorList>
            <person name="Ravel J."/>
            <person name="Jiang L."/>
            <person name="Stanley S.T."/>
            <person name="Wilson M.R."/>
            <person name="Decker R.S."/>
            <person name="Read T.D."/>
            <person name="Worsham P."/>
            <person name="Keim P.S."/>
            <person name="Salzberg S.L."/>
            <person name="Fraser-Liggett C.M."/>
            <person name="Rasko D.A."/>
        </authorList>
    </citation>
    <scope>NUCLEOTIDE SEQUENCE [LARGE SCALE GENOMIC DNA]</scope>
    <source>
        <strain>Ames ancestor</strain>
    </source>
</reference>
<reference key="3">
    <citation type="submission" date="2004-01" db="EMBL/GenBank/DDBJ databases">
        <title>Complete genome sequence of Bacillus anthracis Sterne.</title>
        <authorList>
            <person name="Brettin T.S."/>
            <person name="Bruce D."/>
            <person name="Challacombe J.F."/>
            <person name="Gilna P."/>
            <person name="Han C."/>
            <person name="Hill K."/>
            <person name="Hitchcock P."/>
            <person name="Jackson P."/>
            <person name="Keim P."/>
            <person name="Longmire J."/>
            <person name="Lucas S."/>
            <person name="Okinaka R."/>
            <person name="Richardson P."/>
            <person name="Rubin E."/>
            <person name="Tice H."/>
        </authorList>
    </citation>
    <scope>NUCLEOTIDE SEQUENCE [LARGE SCALE GENOMIC DNA]</scope>
    <source>
        <strain>Sterne</strain>
    </source>
</reference>
<gene>
    <name evidence="1" type="primary">fluC1</name>
    <name evidence="1" type="synonym">crcB1</name>
    <name type="ordered locus">BA_5319</name>
    <name type="ordered locus">GBAA_5319</name>
    <name type="ordered locus">BAS4941</name>
</gene>
<sequence>MRKLIYIIVGIAGILGALSRYYLGLTIHEFWHHTFPLATLLINLAGCFLLAWLTTYIAKLNILPSDVITGIGTGFIGSFTTFSTLSVETIQLINHSEWGIAFLYVSCSILGGLIMSGLGYTLGDFLLKKHLTEGDHL</sequence>
<name>FLUC1_BACAN</name>
<keyword id="KW-1003">Cell membrane</keyword>
<keyword id="KW-0407">Ion channel</keyword>
<keyword id="KW-0406">Ion transport</keyword>
<keyword id="KW-0472">Membrane</keyword>
<keyword id="KW-0479">Metal-binding</keyword>
<keyword id="KW-1185">Reference proteome</keyword>
<keyword id="KW-0915">Sodium</keyword>
<keyword id="KW-0812">Transmembrane</keyword>
<keyword id="KW-1133">Transmembrane helix</keyword>
<keyword id="KW-0813">Transport</keyword>
<protein>
    <recommendedName>
        <fullName evidence="1">Fluoride-specific ion channel FluC 1</fullName>
    </recommendedName>
</protein>
<feature type="chain" id="PRO_0000110039" description="Fluoride-specific ion channel FluC 1">
    <location>
        <begin position="1"/>
        <end position="137"/>
    </location>
</feature>
<feature type="transmembrane region" description="Helical" evidence="1">
    <location>
        <begin position="4"/>
        <end position="24"/>
    </location>
</feature>
<feature type="transmembrane region" description="Helical" evidence="1">
    <location>
        <begin position="37"/>
        <end position="57"/>
    </location>
</feature>
<feature type="transmembrane region" description="Helical" evidence="1">
    <location>
        <begin position="67"/>
        <end position="87"/>
    </location>
</feature>
<feature type="transmembrane region" description="Helical" evidence="1">
    <location>
        <begin position="98"/>
        <end position="118"/>
    </location>
</feature>
<feature type="binding site" evidence="1">
    <location>
        <position position="77"/>
    </location>
    <ligand>
        <name>Na(+)</name>
        <dbReference type="ChEBI" id="CHEBI:29101"/>
        <note>structural</note>
    </ligand>
</feature>
<feature type="binding site" evidence="1">
    <location>
        <position position="80"/>
    </location>
    <ligand>
        <name>Na(+)</name>
        <dbReference type="ChEBI" id="CHEBI:29101"/>
        <note>structural</note>
    </ligand>
</feature>
<evidence type="ECO:0000255" key="1">
    <source>
        <dbReference type="HAMAP-Rule" id="MF_00454"/>
    </source>
</evidence>
<accession>Q81XC1</accession>
<accession>Q6HR56</accession>
<accession>Q6KKH3</accession>